<gene>
    <name evidence="1" type="primary">rplR</name>
    <name type="ordered locus">SACOL2223</name>
</gene>
<name>RL18_STAAC</name>
<sequence>MISKIDKNKVRLKRHARVRTNLSGTAEKPRLNVYRSNKHIYAQIIDDNKGVTLAQASSKDSDIATTATKVELATKVGEAIAKKAADKGIKEIVFDRGGYLYHGRVKALAEAARESGLEF</sequence>
<comment type="function">
    <text evidence="1">This is one of the proteins that bind and probably mediate the attachment of the 5S RNA into the large ribosomal subunit, where it forms part of the central protuberance.</text>
</comment>
<comment type="subunit">
    <text evidence="1">Part of the 50S ribosomal subunit; part of the 5S rRNA/L5/L18/L25 subcomplex. Contacts the 5S and 23S rRNAs.</text>
</comment>
<comment type="similarity">
    <text evidence="1">Belongs to the universal ribosomal protein uL18 family.</text>
</comment>
<accession>Q5HDX4</accession>
<reference key="1">
    <citation type="journal article" date="2005" name="J. Bacteriol.">
        <title>Insights on evolution of virulence and resistance from the complete genome analysis of an early methicillin-resistant Staphylococcus aureus strain and a biofilm-producing methicillin-resistant Staphylococcus epidermidis strain.</title>
        <authorList>
            <person name="Gill S.R."/>
            <person name="Fouts D.E."/>
            <person name="Archer G.L."/>
            <person name="Mongodin E.F."/>
            <person name="DeBoy R.T."/>
            <person name="Ravel J."/>
            <person name="Paulsen I.T."/>
            <person name="Kolonay J.F."/>
            <person name="Brinkac L.M."/>
            <person name="Beanan M.J."/>
            <person name="Dodson R.J."/>
            <person name="Daugherty S.C."/>
            <person name="Madupu R."/>
            <person name="Angiuoli S.V."/>
            <person name="Durkin A.S."/>
            <person name="Haft D.H."/>
            <person name="Vamathevan J.J."/>
            <person name="Khouri H."/>
            <person name="Utterback T.R."/>
            <person name="Lee C."/>
            <person name="Dimitrov G."/>
            <person name="Jiang L."/>
            <person name="Qin H."/>
            <person name="Weidman J."/>
            <person name="Tran K."/>
            <person name="Kang K.H."/>
            <person name="Hance I.R."/>
            <person name="Nelson K.E."/>
            <person name="Fraser C.M."/>
        </authorList>
    </citation>
    <scope>NUCLEOTIDE SEQUENCE [LARGE SCALE GENOMIC DNA]</scope>
    <source>
        <strain>COL</strain>
    </source>
</reference>
<feature type="chain" id="PRO_0000131342" description="Large ribosomal subunit protein uL18">
    <location>
        <begin position="1"/>
        <end position="119"/>
    </location>
</feature>
<protein>
    <recommendedName>
        <fullName evidence="1">Large ribosomal subunit protein uL18</fullName>
    </recommendedName>
    <alternativeName>
        <fullName evidence="2">50S ribosomal protein L18</fullName>
    </alternativeName>
</protein>
<dbReference type="EMBL" id="CP000046">
    <property type="protein sequence ID" value="AAW37098.1"/>
    <property type="molecule type" value="Genomic_DNA"/>
</dbReference>
<dbReference type="RefSeq" id="WP_000623881.1">
    <property type="nucleotide sequence ID" value="NZ_JBGOFO010000004.1"/>
</dbReference>
<dbReference type="SMR" id="Q5HDX4"/>
<dbReference type="KEGG" id="sac:SACOL2223"/>
<dbReference type="HOGENOM" id="CLU_098841_0_1_9"/>
<dbReference type="Proteomes" id="UP000000530">
    <property type="component" value="Chromosome"/>
</dbReference>
<dbReference type="GO" id="GO:0022625">
    <property type="term" value="C:cytosolic large ribosomal subunit"/>
    <property type="evidence" value="ECO:0007669"/>
    <property type="project" value="TreeGrafter"/>
</dbReference>
<dbReference type="GO" id="GO:0008097">
    <property type="term" value="F:5S rRNA binding"/>
    <property type="evidence" value="ECO:0007669"/>
    <property type="project" value="TreeGrafter"/>
</dbReference>
<dbReference type="GO" id="GO:0003735">
    <property type="term" value="F:structural constituent of ribosome"/>
    <property type="evidence" value="ECO:0007669"/>
    <property type="project" value="InterPro"/>
</dbReference>
<dbReference type="GO" id="GO:0006412">
    <property type="term" value="P:translation"/>
    <property type="evidence" value="ECO:0007669"/>
    <property type="project" value="UniProtKB-UniRule"/>
</dbReference>
<dbReference type="CDD" id="cd00432">
    <property type="entry name" value="Ribosomal_L18_L5e"/>
    <property type="match status" value="1"/>
</dbReference>
<dbReference type="FunFam" id="3.30.420.100:FF:000001">
    <property type="entry name" value="50S ribosomal protein L18"/>
    <property type="match status" value="1"/>
</dbReference>
<dbReference type="Gene3D" id="3.30.420.100">
    <property type="match status" value="1"/>
</dbReference>
<dbReference type="HAMAP" id="MF_01337_B">
    <property type="entry name" value="Ribosomal_uL18_B"/>
    <property type="match status" value="1"/>
</dbReference>
<dbReference type="InterPro" id="IPR004389">
    <property type="entry name" value="Ribosomal_uL18_bac-type"/>
</dbReference>
<dbReference type="InterPro" id="IPR005484">
    <property type="entry name" value="Ribosomal_uL18_bac/euk"/>
</dbReference>
<dbReference type="NCBIfam" id="TIGR00060">
    <property type="entry name" value="L18_bact"/>
    <property type="match status" value="1"/>
</dbReference>
<dbReference type="PANTHER" id="PTHR12899">
    <property type="entry name" value="39S RIBOSOMAL PROTEIN L18, MITOCHONDRIAL"/>
    <property type="match status" value="1"/>
</dbReference>
<dbReference type="PANTHER" id="PTHR12899:SF3">
    <property type="entry name" value="LARGE RIBOSOMAL SUBUNIT PROTEIN UL18M"/>
    <property type="match status" value="1"/>
</dbReference>
<dbReference type="Pfam" id="PF00861">
    <property type="entry name" value="Ribosomal_L18p"/>
    <property type="match status" value="1"/>
</dbReference>
<dbReference type="SUPFAM" id="SSF53137">
    <property type="entry name" value="Translational machinery components"/>
    <property type="match status" value="1"/>
</dbReference>
<keyword id="KW-0687">Ribonucleoprotein</keyword>
<keyword id="KW-0689">Ribosomal protein</keyword>
<keyword id="KW-0694">RNA-binding</keyword>
<keyword id="KW-0699">rRNA-binding</keyword>
<proteinExistence type="inferred from homology"/>
<organism>
    <name type="scientific">Staphylococcus aureus (strain COL)</name>
    <dbReference type="NCBI Taxonomy" id="93062"/>
    <lineage>
        <taxon>Bacteria</taxon>
        <taxon>Bacillati</taxon>
        <taxon>Bacillota</taxon>
        <taxon>Bacilli</taxon>
        <taxon>Bacillales</taxon>
        <taxon>Staphylococcaceae</taxon>
        <taxon>Staphylococcus</taxon>
    </lineage>
</organism>
<evidence type="ECO:0000255" key="1">
    <source>
        <dbReference type="HAMAP-Rule" id="MF_01337"/>
    </source>
</evidence>
<evidence type="ECO:0000305" key="2"/>